<dbReference type="EC" id="3.1.3.-" evidence="1"/>
<dbReference type="EMBL" id="AE009439">
    <property type="protein sequence ID" value="AAM02183.1"/>
    <property type="status" value="ALT_INIT"/>
    <property type="molecule type" value="Genomic_DNA"/>
</dbReference>
<dbReference type="RefSeq" id="WP_148679656.1">
    <property type="nucleotide sequence ID" value="NC_003551.1"/>
</dbReference>
<dbReference type="SMR" id="Q8TWR2"/>
<dbReference type="FunCoup" id="Q8TWR2">
    <property type="interactions" value="26"/>
</dbReference>
<dbReference type="STRING" id="190192.MK0970"/>
<dbReference type="PaxDb" id="190192-MK0970"/>
<dbReference type="EnsemblBacteria" id="AAM02183">
    <property type="protein sequence ID" value="AAM02183"/>
    <property type="gene ID" value="MK0970"/>
</dbReference>
<dbReference type="GeneID" id="1477071"/>
<dbReference type="KEGG" id="mka:MK0970"/>
<dbReference type="HOGENOM" id="CLU_045011_8_3_2"/>
<dbReference type="InParanoid" id="Q8TWR2"/>
<dbReference type="OrthoDB" id="27736at2157"/>
<dbReference type="Proteomes" id="UP000001826">
    <property type="component" value="Chromosome"/>
</dbReference>
<dbReference type="GO" id="GO:0046872">
    <property type="term" value="F:metal ion binding"/>
    <property type="evidence" value="ECO:0007669"/>
    <property type="project" value="UniProtKB-KW"/>
</dbReference>
<dbReference type="GO" id="GO:0016791">
    <property type="term" value="F:phosphatase activity"/>
    <property type="evidence" value="ECO:0007669"/>
    <property type="project" value="UniProtKB-ARBA"/>
</dbReference>
<dbReference type="GO" id="GO:0044283">
    <property type="term" value="P:small molecule biosynthetic process"/>
    <property type="evidence" value="ECO:0007669"/>
    <property type="project" value="UniProtKB-ARBA"/>
</dbReference>
<dbReference type="CDD" id="cd04305">
    <property type="entry name" value="HAD_Neu5Ac-Pase_like"/>
    <property type="match status" value="1"/>
</dbReference>
<dbReference type="Gene3D" id="1.10.150.520">
    <property type="match status" value="1"/>
</dbReference>
<dbReference type="Gene3D" id="3.40.50.1000">
    <property type="entry name" value="HAD superfamily/HAD-like"/>
    <property type="match status" value="1"/>
</dbReference>
<dbReference type="InterPro" id="IPR051400">
    <property type="entry name" value="HAD-like_hydrolase"/>
</dbReference>
<dbReference type="InterPro" id="IPR036412">
    <property type="entry name" value="HAD-like_sf"/>
</dbReference>
<dbReference type="InterPro" id="IPR006439">
    <property type="entry name" value="HAD-SF_hydro_IA"/>
</dbReference>
<dbReference type="InterPro" id="IPR011950">
    <property type="entry name" value="HAD-SF_hydro_IA_CTE7"/>
</dbReference>
<dbReference type="InterPro" id="IPR023214">
    <property type="entry name" value="HAD_sf"/>
</dbReference>
<dbReference type="NCBIfam" id="TIGR02253">
    <property type="entry name" value="CTE7"/>
    <property type="match status" value="1"/>
</dbReference>
<dbReference type="NCBIfam" id="TIGR01549">
    <property type="entry name" value="HAD-SF-IA-v1"/>
    <property type="match status" value="1"/>
</dbReference>
<dbReference type="NCBIfam" id="TIGR01509">
    <property type="entry name" value="HAD-SF-IA-v3"/>
    <property type="match status" value="1"/>
</dbReference>
<dbReference type="PANTHER" id="PTHR46470:SF2">
    <property type="entry name" value="GLYCERALDEHYDE 3-PHOSPHATE PHOSPHATASE"/>
    <property type="match status" value="1"/>
</dbReference>
<dbReference type="PANTHER" id="PTHR46470">
    <property type="entry name" value="N-ACYLNEURAMINATE-9-PHOSPHATASE"/>
    <property type="match status" value="1"/>
</dbReference>
<dbReference type="Pfam" id="PF00702">
    <property type="entry name" value="Hydrolase"/>
    <property type="match status" value="1"/>
</dbReference>
<dbReference type="PRINTS" id="PR00413">
    <property type="entry name" value="HADHALOGNASE"/>
</dbReference>
<dbReference type="SFLD" id="SFLDG01135">
    <property type="entry name" value="C1.5.6:_HAD__Beta-PGM__Phospha"/>
    <property type="match status" value="1"/>
</dbReference>
<dbReference type="SFLD" id="SFLDS00003">
    <property type="entry name" value="Haloacid_Dehalogenase"/>
    <property type="match status" value="1"/>
</dbReference>
<dbReference type="SUPFAM" id="SSF56784">
    <property type="entry name" value="HAD-like"/>
    <property type="match status" value="1"/>
</dbReference>
<gene>
    <name type="ordered locus">MK0970</name>
</gene>
<name>G3PP_METKA</name>
<proteinExistence type="inferred from homology"/>
<sequence length="233" mass="26692">MIKAVLFDVDDTLYPSSKLAEEARRNAIRAMIEAGLETDLSEEELYRELQEVVKEYGSNHPRHFDLLLRRIGADPEPKLVAAAVVAYHDTKFAYLKPYPDVIPTLMQLREMGFKLGAVTSGLAVKQWEKLIRLGIHHFFHEVVISEEIGVEKPNPKIFIEAARRLGVKPEEAVYVGDRLDKDIRGANRAGMVTVRIRRGKYQDMEPRNDDDVPDFEIDRPRELLDVVRELAKD</sequence>
<reference key="1">
    <citation type="journal article" date="2002" name="Proc. Natl. Acad. Sci. U.S.A.">
        <title>The complete genome of hyperthermophile Methanopyrus kandleri AV19 and monophyly of archaeal methanogens.</title>
        <authorList>
            <person name="Slesarev A.I."/>
            <person name="Mezhevaya K.V."/>
            <person name="Makarova K.S."/>
            <person name="Polushin N.N."/>
            <person name="Shcherbinina O.V."/>
            <person name="Shakhova V.V."/>
            <person name="Belova G.I."/>
            <person name="Aravind L."/>
            <person name="Natale D.A."/>
            <person name="Rogozin I.B."/>
            <person name="Tatusov R.L."/>
            <person name="Wolf Y.I."/>
            <person name="Stetter K.O."/>
            <person name="Malykh A.G."/>
            <person name="Koonin E.V."/>
            <person name="Kozyavkin S.A."/>
        </authorList>
    </citation>
    <scope>NUCLEOTIDE SEQUENCE [LARGE SCALE GENOMIC DNA]</scope>
    <source>
        <strain>AV19 / DSM 6324 / JCM 9639 / NBRC 100938</strain>
    </source>
</reference>
<accession>Q8TWR2</accession>
<feature type="chain" id="PRO_0000107330" description="Glyceraldehyde 3-phosphate phosphatase">
    <location>
        <begin position="1"/>
        <end position="233"/>
    </location>
</feature>
<organism>
    <name type="scientific">Methanopyrus kandleri (strain AV19 / DSM 6324 / JCM 9639 / NBRC 100938)</name>
    <dbReference type="NCBI Taxonomy" id="190192"/>
    <lineage>
        <taxon>Archaea</taxon>
        <taxon>Methanobacteriati</taxon>
        <taxon>Methanobacteriota</taxon>
        <taxon>Methanomada group</taxon>
        <taxon>Methanopyri</taxon>
        <taxon>Methanopyrales</taxon>
        <taxon>Methanopyraceae</taxon>
        <taxon>Methanopyrus</taxon>
    </lineage>
</organism>
<evidence type="ECO:0000250" key="1">
    <source>
        <dbReference type="UniProtKB" id="Q58832"/>
    </source>
</evidence>
<evidence type="ECO:0000305" key="2"/>
<keyword id="KW-0378">Hydrolase</keyword>
<keyword id="KW-0460">Magnesium</keyword>
<keyword id="KW-0479">Metal-binding</keyword>
<keyword id="KW-1185">Reference proteome</keyword>
<comment type="function">
    <text evidence="1">Catalyzes the dephosphorylation of D,L-glyceraldehyde 3-phosphate in vitro.</text>
</comment>
<comment type="cofactor">
    <cofactor evidence="1">
        <name>Mg(2+)</name>
        <dbReference type="ChEBI" id="CHEBI:18420"/>
    </cofactor>
</comment>
<comment type="similarity">
    <text evidence="2">Belongs to the HAD-like hydrolase superfamily.</text>
</comment>
<comment type="sequence caution" evidence="2">
    <conflict type="erroneous initiation">
        <sequence resource="EMBL-CDS" id="AAM02183"/>
    </conflict>
</comment>
<protein>
    <recommendedName>
        <fullName evidence="1">Glyceraldehyde 3-phosphate phosphatase</fullName>
        <ecNumber evidence="1">3.1.3.-</ecNumber>
    </recommendedName>
</protein>